<dbReference type="EMBL" id="AE000516">
    <property type="protein sequence ID" value="AAK48331.1"/>
    <property type="molecule type" value="Genomic_DNA"/>
</dbReference>
<dbReference type="PIR" id="F70654">
    <property type="entry name" value="F70654"/>
</dbReference>
<dbReference type="RefSeq" id="WP_003399759.1">
    <property type="nucleotide sequence ID" value="NZ_KK341227.1"/>
</dbReference>
<dbReference type="RefSeq" id="WP_010924725.1">
    <property type="nucleotide sequence ID" value="NC_002755.2"/>
</dbReference>
<dbReference type="SMR" id="P9WJB6"/>
<dbReference type="GeneID" id="45427853"/>
<dbReference type="KEGG" id="mtc:MT3964"/>
<dbReference type="PATRIC" id="fig|83331.31.peg.4263"/>
<dbReference type="HOGENOM" id="CLU_127701_2_1_11"/>
<dbReference type="Proteomes" id="UP000001020">
    <property type="component" value="Chromosome"/>
</dbReference>
<dbReference type="GO" id="GO:0005737">
    <property type="term" value="C:cytoplasm"/>
    <property type="evidence" value="ECO:0007669"/>
    <property type="project" value="UniProtKB-KW"/>
</dbReference>
<dbReference type="GO" id="GO:0009295">
    <property type="term" value="C:nucleoid"/>
    <property type="evidence" value="ECO:0007669"/>
    <property type="project" value="UniProtKB-SubCell"/>
</dbReference>
<dbReference type="GO" id="GO:0003677">
    <property type="term" value="F:DNA binding"/>
    <property type="evidence" value="ECO:0007669"/>
    <property type="project" value="UniProtKB-KW"/>
</dbReference>
<dbReference type="FunFam" id="1.10.260.40:FF:000028">
    <property type="entry name" value="Secretion protein EspR"/>
    <property type="match status" value="1"/>
</dbReference>
<dbReference type="Gene3D" id="6.10.250.2310">
    <property type="match status" value="1"/>
</dbReference>
<dbReference type="Gene3D" id="1.10.260.40">
    <property type="entry name" value="lambda repressor-like DNA-binding domains"/>
    <property type="match status" value="1"/>
</dbReference>
<dbReference type="InterPro" id="IPR001387">
    <property type="entry name" value="Cro/C1-type_HTH"/>
</dbReference>
<dbReference type="InterPro" id="IPR010982">
    <property type="entry name" value="Lambda_DNA-bd_dom_sf"/>
</dbReference>
<organism>
    <name type="scientific">Mycobacterium tuberculosis (strain CDC 1551 / Oshkosh)</name>
    <dbReference type="NCBI Taxonomy" id="83331"/>
    <lineage>
        <taxon>Bacteria</taxon>
        <taxon>Bacillati</taxon>
        <taxon>Actinomycetota</taxon>
        <taxon>Actinomycetes</taxon>
        <taxon>Mycobacteriales</taxon>
        <taxon>Mycobacteriaceae</taxon>
        <taxon>Mycobacterium</taxon>
        <taxon>Mycobacterium tuberculosis complex</taxon>
    </lineage>
</organism>
<name>ESPR_MYCTO</name>
<comment type="function">
    <text evidence="1">Virulence regulator that has both architectural and regulatory roles. Impacts cell wall functions and pathogenesis through regulation of multiple genes.</text>
</comment>
<comment type="subunit">
    <text evidence="1">Homodimer. Binds DNA as a dimer of dimers.</text>
</comment>
<comment type="subcellular location">
    <subcellularLocation>
        <location evidence="1">Cytoplasm</location>
        <location evidence="1">Nucleoid</location>
    </subcellularLocation>
</comment>
<proteinExistence type="inferred from homology"/>
<accession>P9WJB6</accession>
<accession>L0TDR1</accession>
<accession>P96228</accession>
<accession>Q8VIS2</accession>
<keyword id="KW-0010">Activator</keyword>
<keyword id="KW-0963">Cytoplasm</keyword>
<keyword id="KW-0238">DNA-binding</keyword>
<keyword id="KW-1185">Reference proteome</keyword>
<keyword id="KW-0678">Repressor</keyword>
<keyword id="KW-0804">Transcription</keyword>
<keyword id="KW-0805">Transcription regulation</keyword>
<keyword id="KW-0843">Virulence</keyword>
<sequence length="132" mass="14709">MSTTFAARLNRLFDTVYPPGRGPHTSAEVIAALKAEGITMSAPYLSQLRSGNRTNPSGATMAALANFFRIKAAYFTDDEYYEKLDKELQWLCTMRDDGVRRIAQRAHGLPSAAQQKVLDRIDELRRAEGIDA</sequence>
<gene>
    <name evidence="1" type="primary">espR</name>
    <name type="ordered locus">MT3964</name>
</gene>
<feature type="chain" id="PRO_0000427858" description="Nucleoid-associated protein EspR">
    <location>
        <begin position="1"/>
        <end position="132"/>
    </location>
</feature>
<feature type="DNA-binding region" description="H-T-H motif" evidence="2">
    <location>
        <begin position="38"/>
        <end position="50"/>
    </location>
</feature>
<evidence type="ECO:0000250" key="1">
    <source>
        <dbReference type="UniProtKB" id="P9WJB7"/>
    </source>
</evidence>
<evidence type="ECO:0000255" key="2"/>
<reference key="1">
    <citation type="journal article" date="2002" name="J. Bacteriol.">
        <title>Whole-genome comparison of Mycobacterium tuberculosis clinical and laboratory strains.</title>
        <authorList>
            <person name="Fleischmann R.D."/>
            <person name="Alland D."/>
            <person name="Eisen J.A."/>
            <person name="Carpenter L."/>
            <person name="White O."/>
            <person name="Peterson J.D."/>
            <person name="DeBoy R.T."/>
            <person name="Dodson R.J."/>
            <person name="Gwinn M.L."/>
            <person name="Haft D.H."/>
            <person name="Hickey E.K."/>
            <person name="Kolonay J.F."/>
            <person name="Nelson W.C."/>
            <person name="Umayam L.A."/>
            <person name="Ermolaeva M.D."/>
            <person name="Salzberg S.L."/>
            <person name="Delcher A."/>
            <person name="Utterback T.R."/>
            <person name="Weidman J.F."/>
            <person name="Khouri H.M."/>
            <person name="Gill J."/>
            <person name="Mikula A."/>
            <person name="Bishai W."/>
            <person name="Jacobs W.R. Jr."/>
            <person name="Venter J.C."/>
            <person name="Fraser C.M."/>
        </authorList>
    </citation>
    <scope>NUCLEOTIDE SEQUENCE [LARGE SCALE GENOMIC DNA]</scope>
    <source>
        <strain>CDC 1551 / Oshkosh</strain>
    </source>
</reference>
<protein>
    <recommendedName>
        <fullName evidence="1">Nucleoid-associated protein EspR</fullName>
    </recommendedName>
</protein>